<name>HIS8_RHOPT</name>
<accession>B3Q8Z5</accession>
<keyword id="KW-0028">Amino-acid biosynthesis</keyword>
<keyword id="KW-0032">Aminotransferase</keyword>
<keyword id="KW-0368">Histidine biosynthesis</keyword>
<keyword id="KW-0663">Pyridoxal phosphate</keyword>
<keyword id="KW-0808">Transferase</keyword>
<sequence length="365" mass="39354">MSRPVPNPGILDIAPYTPGKSPVAEPGRKVFKLSANETPFGPSPHAIAAYKSAADHLEDYPEGTSRILREAIGKAYGLDPDRIICGAGSDEILNLLAHTYLAPGDEAISSQHGFLVYPIATLANGAKNVVAPEKNLTTDVDAMLAAVTPNTKLVWLANPNNPTGTYIPFDEVKRLRAGLPSHVVLVLDAAYADYVMKNDYELGIELVSTTENTVLTHTFSKVHGLAALRIGWMFGPANIVDAVNRIRGPFNVSVPAQLAAVAAIQDTGHVERSRAHTDKWRNTLAEELPKLGLTVTRSVCNFVLIHFPTTKGKTAAEADAFLTQRGLVLRALNNYGLPHALRMTIGTDEANALVLENLREFMGQP</sequence>
<proteinExistence type="inferred from homology"/>
<comment type="catalytic activity">
    <reaction evidence="1">
        <text>L-histidinol phosphate + 2-oxoglutarate = 3-(imidazol-4-yl)-2-oxopropyl phosphate + L-glutamate</text>
        <dbReference type="Rhea" id="RHEA:23744"/>
        <dbReference type="ChEBI" id="CHEBI:16810"/>
        <dbReference type="ChEBI" id="CHEBI:29985"/>
        <dbReference type="ChEBI" id="CHEBI:57766"/>
        <dbReference type="ChEBI" id="CHEBI:57980"/>
        <dbReference type="EC" id="2.6.1.9"/>
    </reaction>
</comment>
<comment type="cofactor">
    <cofactor evidence="1">
        <name>pyridoxal 5'-phosphate</name>
        <dbReference type="ChEBI" id="CHEBI:597326"/>
    </cofactor>
</comment>
<comment type="pathway">
    <text evidence="1">Amino-acid biosynthesis; L-histidine biosynthesis; L-histidine from 5-phospho-alpha-D-ribose 1-diphosphate: step 7/9.</text>
</comment>
<comment type="subunit">
    <text evidence="1">Homodimer.</text>
</comment>
<comment type="similarity">
    <text evidence="1">Belongs to the class-II pyridoxal-phosphate-dependent aminotransferase family. Histidinol-phosphate aminotransferase subfamily.</text>
</comment>
<reference key="1">
    <citation type="submission" date="2008-05" db="EMBL/GenBank/DDBJ databases">
        <title>Complete sequence of Rhodopseudomonas palustris TIE-1.</title>
        <authorList>
            <consortium name="US DOE Joint Genome Institute"/>
            <person name="Lucas S."/>
            <person name="Copeland A."/>
            <person name="Lapidus A."/>
            <person name="Glavina del Rio T."/>
            <person name="Dalin E."/>
            <person name="Tice H."/>
            <person name="Pitluck S."/>
            <person name="Chain P."/>
            <person name="Malfatti S."/>
            <person name="Shin M."/>
            <person name="Vergez L."/>
            <person name="Lang D."/>
            <person name="Schmutz J."/>
            <person name="Larimer F."/>
            <person name="Land M."/>
            <person name="Hauser L."/>
            <person name="Kyrpides N."/>
            <person name="Mikhailova N."/>
            <person name="Emerson D."/>
            <person name="Newman D.K."/>
            <person name="Roden E."/>
            <person name="Richardson P."/>
        </authorList>
    </citation>
    <scope>NUCLEOTIDE SEQUENCE [LARGE SCALE GENOMIC DNA]</scope>
    <source>
        <strain>TIE-1</strain>
    </source>
</reference>
<protein>
    <recommendedName>
        <fullName evidence="1">Histidinol-phosphate aminotransferase</fullName>
        <ecNumber evidence="1">2.6.1.9</ecNumber>
    </recommendedName>
    <alternativeName>
        <fullName evidence="1">Imidazole acetol-phosphate transaminase</fullName>
    </alternativeName>
</protein>
<feature type="chain" id="PRO_1000135415" description="Histidinol-phosphate aminotransferase">
    <location>
        <begin position="1"/>
        <end position="365"/>
    </location>
</feature>
<feature type="region of interest" description="Disordered" evidence="2">
    <location>
        <begin position="1"/>
        <end position="21"/>
    </location>
</feature>
<feature type="modified residue" description="N6-(pyridoxal phosphate)lysine" evidence="1">
    <location>
        <position position="221"/>
    </location>
</feature>
<evidence type="ECO:0000255" key="1">
    <source>
        <dbReference type="HAMAP-Rule" id="MF_01023"/>
    </source>
</evidence>
<evidence type="ECO:0000256" key="2">
    <source>
        <dbReference type="SAM" id="MobiDB-lite"/>
    </source>
</evidence>
<dbReference type="EC" id="2.6.1.9" evidence="1"/>
<dbReference type="EMBL" id="CP001096">
    <property type="protein sequence ID" value="ACF03416.1"/>
    <property type="molecule type" value="Genomic_DNA"/>
</dbReference>
<dbReference type="RefSeq" id="WP_011159973.1">
    <property type="nucleotide sequence ID" value="NC_011004.1"/>
</dbReference>
<dbReference type="SMR" id="B3Q8Z5"/>
<dbReference type="GeneID" id="66895580"/>
<dbReference type="KEGG" id="rpt:Rpal_4927"/>
<dbReference type="HOGENOM" id="CLU_017584_3_3_5"/>
<dbReference type="OrthoDB" id="9809616at2"/>
<dbReference type="UniPathway" id="UPA00031">
    <property type="reaction ID" value="UER00012"/>
</dbReference>
<dbReference type="Proteomes" id="UP000001725">
    <property type="component" value="Chromosome"/>
</dbReference>
<dbReference type="GO" id="GO:0004400">
    <property type="term" value="F:histidinol-phosphate transaminase activity"/>
    <property type="evidence" value="ECO:0007669"/>
    <property type="project" value="UniProtKB-UniRule"/>
</dbReference>
<dbReference type="GO" id="GO:0030170">
    <property type="term" value="F:pyridoxal phosphate binding"/>
    <property type="evidence" value="ECO:0007669"/>
    <property type="project" value="InterPro"/>
</dbReference>
<dbReference type="GO" id="GO:0000105">
    <property type="term" value="P:L-histidine biosynthetic process"/>
    <property type="evidence" value="ECO:0007669"/>
    <property type="project" value="UniProtKB-UniRule"/>
</dbReference>
<dbReference type="CDD" id="cd00609">
    <property type="entry name" value="AAT_like"/>
    <property type="match status" value="1"/>
</dbReference>
<dbReference type="Gene3D" id="3.90.1150.10">
    <property type="entry name" value="Aspartate Aminotransferase, domain 1"/>
    <property type="match status" value="1"/>
</dbReference>
<dbReference type="Gene3D" id="3.40.640.10">
    <property type="entry name" value="Type I PLP-dependent aspartate aminotransferase-like (Major domain)"/>
    <property type="match status" value="1"/>
</dbReference>
<dbReference type="HAMAP" id="MF_01023">
    <property type="entry name" value="HisC_aminotrans_2"/>
    <property type="match status" value="1"/>
</dbReference>
<dbReference type="InterPro" id="IPR004839">
    <property type="entry name" value="Aminotransferase_I/II_large"/>
</dbReference>
<dbReference type="InterPro" id="IPR005861">
    <property type="entry name" value="HisP_aminotrans"/>
</dbReference>
<dbReference type="InterPro" id="IPR050106">
    <property type="entry name" value="HistidinolP_aminotransfase"/>
</dbReference>
<dbReference type="InterPro" id="IPR015424">
    <property type="entry name" value="PyrdxlP-dep_Trfase"/>
</dbReference>
<dbReference type="InterPro" id="IPR015421">
    <property type="entry name" value="PyrdxlP-dep_Trfase_major"/>
</dbReference>
<dbReference type="InterPro" id="IPR015422">
    <property type="entry name" value="PyrdxlP-dep_Trfase_small"/>
</dbReference>
<dbReference type="NCBIfam" id="TIGR01141">
    <property type="entry name" value="hisC"/>
    <property type="match status" value="1"/>
</dbReference>
<dbReference type="PANTHER" id="PTHR43643:SF3">
    <property type="entry name" value="HISTIDINOL-PHOSPHATE AMINOTRANSFERASE"/>
    <property type="match status" value="1"/>
</dbReference>
<dbReference type="PANTHER" id="PTHR43643">
    <property type="entry name" value="HISTIDINOL-PHOSPHATE AMINOTRANSFERASE 2"/>
    <property type="match status" value="1"/>
</dbReference>
<dbReference type="Pfam" id="PF00155">
    <property type="entry name" value="Aminotran_1_2"/>
    <property type="match status" value="1"/>
</dbReference>
<dbReference type="SUPFAM" id="SSF53383">
    <property type="entry name" value="PLP-dependent transferases"/>
    <property type="match status" value="1"/>
</dbReference>
<gene>
    <name evidence="1" type="primary">hisC</name>
    <name type="ordered locus">Rpal_4927</name>
</gene>
<organism>
    <name type="scientific">Rhodopseudomonas palustris (strain TIE-1)</name>
    <dbReference type="NCBI Taxonomy" id="395960"/>
    <lineage>
        <taxon>Bacteria</taxon>
        <taxon>Pseudomonadati</taxon>
        <taxon>Pseudomonadota</taxon>
        <taxon>Alphaproteobacteria</taxon>
        <taxon>Hyphomicrobiales</taxon>
        <taxon>Nitrobacteraceae</taxon>
        <taxon>Rhodopseudomonas</taxon>
    </lineage>
</organism>